<organism>
    <name type="scientific">Bacillus anthracis (strain A0248)</name>
    <dbReference type="NCBI Taxonomy" id="592021"/>
    <lineage>
        <taxon>Bacteria</taxon>
        <taxon>Bacillati</taxon>
        <taxon>Bacillota</taxon>
        <taxon>Bacilli</taxon>
        <taxon>Bacillales</taxon>
        <taxon>Bacillaceae</taxon>
        <taxon>Bacillus</taxon>
        <taxon>Bacillus cereus group</taxon>
    </lineage>
</organism>
<keyword id="KW-0067">ATP-binding</keyword>
<keyword id="KW-0143">Chaperone</keyword>
<keyword id="KW-0963">Cytoplasm</keyword>
<keyword id="KW-0413">Isomerase</keyword>
<keyword id="KW-0547">Nucleotide-binding</keyword>
<accession>C3PAV1</accession>
<proteinExistence type="inferred from homology"/>
<comment type="function">
    <text evidence="1">Together with its co-chaperonin GroES, plays an essential role in assisting protein folding. The GroEL-GroES system forms a nano-cage that allows encapsulation of the non-native substrate proteins and provides a physical environment optimized to promote and accelerate protein folding.</text>
</comment>
<comment type="catalytic activity">
    <reaction evidence="1">
        <text>ATP + H2O + a folded polypeptide = ADP + phosphate + an unfolded polypeptide.</text>
        <dbReference type="EC" id="5.6.1.7"/>
    </reaction>
</comment>
<comment type="subunit">
    <text evidence="1">Forms a cylinder of 14 subunits composed of two heptameric rings stacked back-to-back. Interacts with the co-chaperonin GroES.</text>
</comment>
<comment type="subcellular location">
    <subcellularLocation>
        <location evidence="1">Cytoplasm</location>
    </subcellularLocation>
</comment>
<comment type="similarity">
    <text evidence="1">Belongs to the chaperonin (HSP60) family.</text>
</comment>
<evidence type="ECO:0000255" key="1">
    <source>
        <dbReference type="HAMAP-Rule" id="MF_00600"/>
    </source>
</evidence>
<dbReference type="EC" id="5.6.1.7" evidence="1"/>
<dbReference type="EMBL" id="CP001598">
    <property type="protein sequence ID" value="ACQ48532.1"/>
    <property type="molecule type" value="Genomic_DNA"/>
</dbReference>
<dbReference type="RefSeq" id="WP_001030000.1">
    <property type="nucleotide sequence ID" value="NC_012659.1"/>
</dbReference>
<dbReference type="SMR" id="C3PAV1"/>
<dbReference type="GeneID" id="45020321"/>
<dbReference type="KEGG" id="bai:BAA_0309"/>
<dbReference type="HOGENOM" id="CLU_016503_3_0_9"/>
<dbReference type="GO" id="GO:0005737">
    <property type="term" value="C:cytoplasm"/>
    <property type="evidence" value="ECO:0007669"/>
    <property type="project" value="UniProtKB-SubCell"/>
</dbReference>
<dbReference type="GO" id="GO:0005524">
    <property type="term" value="F:ATP binding"/>
    <property type="evidence" value="ECO:0007669"/>
    <property type="project" value="UniProtKB-UniRule"/>
</dbReference>
<dbReference type="GO" id="GO:0140662">
    <property type="term" value="F:ATP-dependent protein folding chaperone"/>
    <property type="evidence" value="ECO:0007669"/>
    <property type="project" value="InterPro"/>
</dbReference>
<dbReference type="GO" id="GO:0016853">
    <property type="term" value="F:isomerase activity"/>
    <property type="evidence" value="ECO:0007669"/>
    <property type="project" value="UniProtKB-KW"/>
</dbReference>
<dbReference type="GO" id="GO:0051082">
    <property type="term" value="F:unfolded protein binding"/>
    <property type="evidence" value="ECO:0007669"/>
    <property type="project" value="UniProtKB-UniRule"/>
</dbReference>
<dbReference type="GO" id="GO:0042026">
    <property type="term" value="P:protein refolding"/>
    <property type="evidence" value="ECO:0007669"/>
    <property type="project" value="UniProtKB-UniRule"/>
</dbReference>
<dbReference type="CDD" id="cd03344">
    <property type="entry name" value="GroEL"/>
    <property type="match status" value="1"/>
</dbReference>
<dbReference type="FunFam" id="1.10.560.10:FF:000001">
    <property type="entry name" value="60 kDa chaperonin"/>
    <property type="match status" value="1"/>
</dbReference>
<dbReference type="FunFam" id="3.50.7.10:FF:000001">
    <property type="entry name" value="60 kDa chaperonin"/>
    <property type="match status" value="1"/>
</dbReference>
<dbReference type="Gene3D" id="3.50.7.10">
    <property type="entry name" value="GroEL"/>
    <property type="match status" value="1"/>
</dbReference>
<dbReference type="Gene3D" id="1.10.560.10">
    <property type="entry name" value="GroEL-like equatorial domain"/>
    <property type="match status" value="1"/>
</dbReference>
<dbReference type="Gene3D" id="3.30.260.10">
    <property type="entry name" value="TCP-1-like chaperonin intermediate domain"/>
    <property type="match status" value="1"/>
</dbReference>
<dbReference type="HAMAP" id="MF_00600">
    <property type="entry name" value="CH60"/>
    <property type="match status" value="1"/>
</dbReference>
<dbReference type="InterPro" id="IPR018370">
    <property type="entry name" value="Chaperonin_Cpn60_CS"/>
</dbReference>
<dbReference type="InterPro" id="IPR001844">
    <property type="entry name" value="Cpn60/GroEL"/>
</dbReference>
<dbReference type="InterPro" id="IPR002423">
    <property type="entry name" value="Cpn60/GroEL/TCP-1"/>
</dbReference>
<dbReference type="InterPro" id="IPR027409">
    <property type="entry name" value="GroEL-like_apical_dom_sf"/>
</dbReference>
<dbReference type="InterPro" id="IPR027413">
    <property type="entry name" value="GROEL-like_equatorial_sf"/>
</dbReference>
<dbReference type="InterPro" id="IPR027410">
    <property type="entry name" value="TCP-1-like_intermed_sf"/>
</dbReference>
<dbReference type="NCBIfam" id="TIGR02348">
    <property type="entry name" value="GroEL"/>
    <property type="match status" value="1"/>
</dbReference>
<dbReference type="NCBIfam" id="NF000592">
    <property type="entry name" value="PRK00013.1"/>
    <property type="match status" value="1"/>
</dbReference>
<dbReference type="NCBIfam" id="NF009487">
    <property type="entry name" value="PRK12849.1"/>
    <property type="match status" value="1"/>
</dbReference>
<dbReference type="NCBIfam" id="NF009488">
    <property type="entry name" value="PRK12850.1"/>
    <property type="match status" value="1"/>
</dbReference>
<dbReference type="NCBIfam" id="NF009489">
    <property type="entry name" value="PRK12851.1"/>
    <property type="match status" value="1"/>
</dbReference>
<dbReference type="PANTHER" id="PTHR45633">
    <property type="entry name" value="60 KDA HEAT SHOCK PROTEIN, MITOCHONDRIAL"/>
    <property type="match status" value="1"/>
</dbReference>
<dbReference type="Pfam" id="PF00118">
    <property type="entry name" value="Cpn60_TCP1"/>
    <property type="match status" value="1"/>
</dbReference>
<dbReference type="PRINTS" id="PR00298">
    <property type="entry name" value="CHAPERONIN60"/>
</dbReference>
<dbReference type="SUPFAM" id="SSF52029">
    <property type="entry name" value="GroEL apical domain-like"/>
    <property type="match status" value="1"/>
</dbReference>
<dbReference type="SUPFAM" id="SSF48592">
    <property type="entry name" value="GroEL equatorial domain-like"/>
    <property type="match status" value="1"/>
</dbReference>
<dbReference type="SUPFAM" id="SSF54849">
    <property type="entry name" value="GroEL-intermediate domain like"/>
    <property type="match status" value="1"/>
</dbReference>
<dbReference type="PROSITE" id="PS00296">
    <property type="entry name" value="CHAPERONINS_CPN60"/>
    <property type="match status" value="1"/>
</dbReference>
<name>CH60_BACAA</name>
<protein>
    <recommendedName>
        <fullName evidence="1">Chaperonin GroEL</fullName>
        <ecNumber evidence="1">5.6.1.7</ecNumber>
    </recommendedName>
    <alternativeName>
        <fullName evidence="1">60 kDa chaperonin</fullName>
    </alternativeName>
    <alternativeName>
        <fullName evidence="1">Chaperonin-60</fullName>
        <shortName evidence="1">Cpn60</shortName>
    </alternativeName>
</protein>
<reference key="1">
    <citation type="submission" date="2009-04" db="EMBL/GenBank/DDBJ databases">
        <title>Genome sequence of Bacillus anthracis A0248.</title>
        <authorList>
            <person name="Dodson R.J."/>
            <person name="Munk A.C."/>
            <person name="Bruce D."/>
            <person name="Detter C."/>
            <person name="Tapia R."/>
            <person name="Sutton G."/>
            <person name="Sims D."/>
            <person name="Brettin T."/>
        </authorList>
    </citation>
    <scope>NUCLEOTIDE SEQUENCE [LARGE SCALE GENOMIC DNA]</scope>
    <source>
        <strain>A0248</strain>
    </source>
</reference>
<sequence>MAKDIKFSEEARRSMLRGVDTLANAVKVTLGPKGRNVVLEKKFGSPLITNDGVTIAKEIELEDAFENMGAKLVAEVASKTNDVAGDGTTTATVLAQAMIREGLKNVTAGANPMGLRKGIEKAVVAAVEELKTISKPIEGKSSIAQVAAISAADEEVGQLIAEAMERVGNDGVITLEESKGFTTELDVVEGMQFDRGYASPYMITDSDKMEAVLDNPYILITDKKISNIQEILPVLEQVVQQGKPLLIIAEDVEGEALATLVVNKLRGTFNVVAVKAPGFGDRRKAMLEDIAILTGGEVITEELGRDLKSATVESLGRAGKVVVTKENTTVVEGVGSTEQIEARIGQIRAQLEETTSEFDREKLQERLAKLVGGVAVIKVGAATETELKERKLRIEDALNSTRAAVEEGIVAGGGTSLMNVYTKVASIVAEGDEATGINIVLRALEEPVRQIAINAGLEGSVVVERLKGEKVGVGFNAATGEWVNMLETGIVDPAKVTRSALQNAASVAAMFLTTEAVVADKPEPNAPAMPDMGGMGMGGMGGMM</sequence>
<gene>
    <name evidence="1" type="primary">groEL</name>
    <name evidence="1" type="synonym">groL</name>
    <name type="ordered locus">BAA_0309</name>
</gene>
<feature type="chain" id="PRO_1000147013" description="Chaperonin GroEL">
    <location>
        <begin position="1"/>
        <end position="544"/>
    </location>
</feature>
<feature type="binding site" evidence="1">
    <location>
        <begin position="29"/>
        <end position="32"/>
    </location>
    <ligand>
        <name>ATP</name>
        <dbReference type="ChEBI" id="CHEBI:30616"/>
    </ligand>
</feature>
<feature type="binding site" evidence="1">
    <location>
        <begin position="86"/>
        <end position="90"/>
    </location>
    <ligand>
        <name>ATP</name>
        <dbReference type="ChEBI" id="CHEBI:30616"/>
    </ligand>
</feature>
<feature type="binding site" evidence="1">
    <location>
        <position position="413"/>
    </location>
    <ligand>
        <name>ATP</name>
        <dbReference type="ChEBI" id="CHEBI:30616"/>
    </ligand>
</feature>
<feature type="binding site" evidence="1">
    <location>
        <begin position="476"/>
        <end position="478"/>
    </location>
    <ligand>
        <name>ATP</name>
        <dbReference type="ChEBI" id="CHEBI:30616"/>
    </ligand>
</feature>
<feature type="binding site" evidence="1">
    <location>
        <position position="492"/>
    </location>
    <ligand>
        <name>ATP</name>
        <dbReference type="ChEBI" id="CHEBI:30616"/>
    </ligand>
</feature>